<protein>
    <recommendedName>
        <fullName evidence="1">tRNA uridine(34) hydroxylase</fullName>
        <ecNumber evidence="1">1.14.-.-</ecNumber>
    </recommendedName>
    <alternativeName>
        <fullName evidence="1">tRNA hydroxylation protein O</fullName>
    </alternativeName>
</protein>
<accession>A9WXF1</accession>
<sequence length="305" mass="33840">MSNLPFTVAALYCFAPLPQYESLREPLAQLCCANGIKGTLLLAAEGINGTVAGSAGAIEKLIAHITAIPGLGEPELKYSHASEMPFHRMKVRLKREIVTMGVEGIDPLKSVGTYIVPKDWNALIADENTVVVDTRNDYEYAIGTFEGAIDPQTRTFRAFPEWVKQNRDRLEGKKIAMFCTGGIRCEKATAFVKGLGFDDVYHLKGGILKYLEEVPREQSMWNGECFVFDERVAVGHGLAESDVELCRACRRPLTPQDKLSQFFEEGVSCAGCYAERTPEDRARYAERQKQVKLAEKRGANKHIGS</sequence>
<name>TRHO_BRUSI</name>
<proteinExistence type="inferred from homology"/>
<organism>
    <name type="scientific">Brucella suis (strain ATCC 23445 / NCTC 10510)</name>
    <dbReference type="NCBI Taxonomy" id="470137"/>
    <lineage>
        <taxon>Bacteria</taxon>
        <taxon>Pseudomonadati</taxon>
        <taxon>Pseudomonadota</taxon>
        <taxon>Alphaproteobacteria</taxon>
        <taxon>Hyphomicrobiales</taxon>
        <taxon>Brucellaceae</taxon>
        <taxon>Brucella/Ochrobactrum group</taxon>
        <taxon>Brucella</taxon>
    </lineage>
</organism>
<keyword id="KW-0560">Oxidoreductase</keyword>
<keyword id="KW-0819">tRNA processing</keyword>
<evidence type="ECO:0000255" key="1">
    <source>
        <dbReference type="HAMAP-Rule" id="MF_00469"/>
    </source>
</evidence>
<comment type="function">
    <text evidence="1">Catalyzes oxygen-dependent 5-hydroxyuridine (ho5U) modification at position 34 in tRNAs.</text>
</comment>
<comment type="catalytic activity">
    <reaction evidence="1">
        <text>uridine(34) in tRNA + AH2 + O2 = 5-hydroxyuridine(34) in tRNA + A + H2O</text>
        <dbReference type="Rhea" id="RHEA:64224"/>
        <dbReference type="Rhea" id="RHEA-COMP:11727"/>
        <dbReference type="Rhea" id="RHEA-COMP:13381"/>
        <dbReference type="ChEBI" id="CHEBI:13193"/>
        <dbReference type="ChEBI" id="CHEBI:15377"/>
        <dbReference type="ChEBI" id="CHEBI:15379"/>
        <dbReference type="ChEBI" id="CHEBI:17499"/>
        <dbReference type="ChEBI" id="CHEBI:65315"/>
        <dbReference type="ChEBI" id="CHEBI:136877"/>
    </reaction>
</comment>
<comment type="similarity">
    <text evidence="1">Belongs to the TrhO family.</text>
</comment>
<reference key="1">
    <citation type="submission" date="2007-12" db="EMBL/GenBank/DDBJ databases">
        <title>Brucella suis ATCC 23445 whole genome shotgun sequencing project.</title>
        <authorList>
            <person name="Setubal J.C."/>
            <person name="Bowns C."/>
            <person name="Boyle S."/>
            <person name="Crasta O.R."/>
            <person name="Czar M.J."/>
            <person name="Dharmanolla C."/>
            <person name="Gillespie J.J."/>
            <person name="Kenyon R.W."/>
            <person name="Lu J."/>
            <person name="Mane S."/>
            <person name="Mohapatra S."/>
            <person name="Nagrani S."/>
            <person name="Purkayastha A."/>
            <person name="Rajasimha H.K."/>
            <person name="Shallom J.M."/>
            <person name="Shallom S."/>
            <person name="Shukla M."/>
            <person name="Snyder E.E."/>
            <person name="Sobral B.W."/>
            <person name="Wattam A.R."/>
            <person name="Will R."/>
            <person name="Williams K."/>
            <person name="Yoo H."/>
            <person name="Bruce D."/>
            <person name="Detter C."/>
            <person name="Munk C."/>
            <person name="Brettin T.S."/>
        </authorList>
    </citation>
    <scope>NUCLEOTIDE SEQUENCE [LARGE SCALE GENOMIC DNA]</scope>
    <source>
        <strain>ATCC 23445 / NCTC 10510</strain>
    </source>
</reference>
<dbReference type="EC" id="1.14.-.-" evidence="1"/>
<dbReference type="EMBL" id="CP000912">
    <property type="protein sequence ID" value="ABY39117.1"/>
    <property type="molecule type" value="Genomic_DNA"/>
</dbReference>
<dbReference type="RefSeq" id="WP_006073235.1">
    <property type="nucleotide sequence ID" value="NC_010167.1"/>
</dbReference>
<dbReference type="SMR" id="A9WXF1"/>
<dbReference type="KEGG" id="bmt:BSUIS_B0091"/>
<dbReference type="HOGENOM" id="CLU_038878_0_0_5"/>
<dbReference type="Proteomes" id="UP000008545">
    <property type="component" value="Chromosome II"/>
</dbReference>
<dbReference type="GO" id="GO:0016705">
    <property type="term" value="F:oxidoreductase activity, acting on paired donors, with incorporation or reduction of molecular oxygen"/>
    <property type="evidence" value="ECO:0007669"/>
    <property type="project" value="UniProtKB-UniRule"/>
</dbReference>
<dbReference type="GO" id="GO:0006400">
    <property type="term" value="P:tRNA modification"/>
    <property type="evidence" value="ECO:0007669"/>
    <property type="project" value="UniProtKB-UniRule"/>
</dbReference>
<dbReference type="CDD" id="cd01518">
    <property type="entry name" value="RHOD_YceA"/>
    <property type="match status" value="1"/>
</dbReference>
<dbReference type="Gene3D" id="3.30.70.100">
    <property type="match status" value="1"/>
</dbReference>
<dbReference type="Gene3D" id="3.40.250.10">
    <property type="entry name" value="Rhodanese-like domain"/>
    <property type="match status" value="1"/>
</dbReference>
<dbReference type="HAMAP" id="MF_00469">
    <property type="entry name" value="TrhO"/>
    <property type="match status" value="1"/>
</dbReference>
<dbReference type="InterPro" id="IPR001763">
    <property type="entry name" value="Rhodanese-like_dom"/>
</dbReference>
<dbReference type="InterPro" id="IPR036873">
    <property type="entry name" value="Rhodanese-like_dom_sf"/>
</dbReference>
<dbReference type="InterPro" id="IPR020936">
    <property type="entry name" value="TrhO"/>
</dbReference>
<dbReference type="InterPro" id="IPR040503">
    <property type="entry name" value="TRHO_N"/>
</dbReference>
<dbReference type="NCBIfam" id="NF001136">
    <property type="entry name" value="PRK00142.1-4"/>
    <property type="match status" value="1"/>
</dbReference>
<dbReference type="PANTHER" id="PTHR43268:SF3">
    <property type="entry name" value="RHODANESE-LIKE DOMAIN-CONTAINING PROTEIN 7-RELATED"/>
    <property type="match status" value="1"/>
</dbReference>
<dbReference type="PANTHER" id="PTHR43268">
    <property type="entry name" value="THIOSULFATE SULFURTRANSFERASE/RHODANESE-LIKE DOMAIN-CONTAINING PROTEIN 2"/>
    <property type="match status" value="1"/>
</dbReference>
<dbReference type="Pfam" id="PF00581">
    <property type="entry name" value="Rhodanese"/>
    <property type="match status" value="1"/>
</dbReference>
<dbReference type="Pfam" id="PF17773">
    <property type="entry name" value="UPF0176_N"/>
    <property type="match status" value="1"/>
</dbReference>
<dbReference type="SMART" id="SM00450">
    <property type="entry name" value="RHOD"/>
    <property type="match status" value="1"/>
</dbReference>
<dbReference type="SUPFAM" id="SSF52821">
    <property type="entry name" value="Rhodanese/Cell cycle control phosphatase"/>
    <property type="match status" value="1"/>
</dbReference>
<dbReference type="PROSITE" id="PS50206">
    <property type="entry name" value="RHODANESE_3"/>
    <property type="match status" value="1"/>
</dbReference>
<gene>
    <name evidence="1" type="primary">trhO</name>
    <name type="ordered locus">BSUIS_B0091</name>
</gene>
<feature type="chain" id="PRO_1000081186" description="tRNA uridine(34) hydroxylase">
    <location>
        <begin position="1"/>
        <end position="305"/>
    </location>
</feature>
<feature type="domain" description="Rhodanese" evidence="1">
    <location>
        <begin position="125"/>
        <end position="219"/>
    </location>
</feature>
<feature type="active site" description="Cysteine persulfide intermediate" evidence="1">
    <location>
        <position position="179"/>
    </location>
</feature>